<feature type="chain" id="PRO_0000352383" description="5-deoxy-glucuronate isomerase">
    <location>
        <begin position="1"/>
        <end position="271"/>
    </location>
</feature>
<proteinExistence type="inferred from homology"/>
<comment type="function">
    <text evidence="1">Involved in the isomerization of 5-deoxy-glucuronate (5DG) to 5-dehydro-2-deoxy-D-gluconate (DKG or 2-deoxy-5-keto-D-gluconate).</text>
</comment>
<comment type="catalytic activity">
    <reaction evidence="1">
        <text>5-deoxy-D-glucuronate = 5-dehydro-2-deoxy-D-gluconate</text>
        <dbReference type="Rhea" id="RHEA:25840"/>
        <dbReference type="ChEBI" id="CHEBI:16669"/>
        <dbReference type="ChEBI" id="CHEBI:58852"/>
        <dbReference type="EC" id="5.3.1.30"/>
    </reaction>
</comment>
<comment type="pathway">
    <text evidence="1">Polyol metabolism; myo-inositol degradation into acetyl-CoA; acetyl-CoA from myo-inositol: step 4/7.</text>
</comment>
<comment type="similarity">
    <text evidence="1">Belongs to the isomerase IolB family.</text>
</comment>
<gene>
    <name evidence="1" type="primary">iolB</name>
    <name type="ordered locus">ABC0423</name>
</gene>
<sequence length="271" mass="30452">MGQLLKKPKTKVLKQGVTLVHDTEAEKAPLKYVSFKLVDIQANAIYEETLGSYECCIVVVRGTVTVTDGEHVFSNIGTRSSVFERKPTDSVYLSNGRSFTVTGTSEACIALCYAPSNKQLPTKLIKASDVGIENRGQLQNKRLVHNILPDSDKTANSLLVVEVFTESGNWSSYPPHKHDEDNLPYESFLEETYYHEIDPPQGFVFQRVYTESRNIDETMAVENGDVVIVPAGYHPVGVPDGYASYYLNVMAGPVRIWKFRNEKDHEWILSR</sequence>
<name>IOLB_SHOC1</name>
<dbReference type="EC" id="5.3.1.30" evidence="1"/>
<dbReference type="EMBL" id="AP006627">
    <property type="protein sequence ID" value="BAD62965.1"/>
    <property type="molecule type" value="Genomic_DNA"/>
</dbReference>
<dbReference type="SMR" id="Q5WKZ0"/>
<dbReference type="STRING" id="66692.ABC0423"/>
<dbReference type="KEGG" id="bcl:ABC0423"/>
<dbReference type="eggNOG" id="COG3718">
    <property type="taxonomic scope" value="Bacteria"/>
</dbReference>
<dbReference type="HOGENOM" id="CLU_066438_1_0_9"/>
<dbReference type="OrthoDB" id="9799936at2"/>
<dbReference type="UniPathway" id="UPA00076">
    <property type="reaction ID" value="UER00920"/>
</dbReference>
<dbReference type="Proteomes" id="UP000001168">
    <property type="component" value="Chromosome"/>
</dbReference>
<dbReference type="GO" id="GO:0102482">
    <property type="term" value="F:5-deoxy-D-glucuronate isomerase activity"/>
    <property type="evidence" value="ECO:0007669"/>
    <property type="project" value="UniProtKB-EC"/>
</dbReference>
<dbReference type="GO" id="GO:0008880">
    <property type="term" value="F:glucuronate isomerase activity"/>
    <property type="evidence" value="ECO:0007669"/>
    <property type="project" value="InterPro"/>
</dbReference>
<dbReference type="GO" id="GO:0019310">
    <property type="term" value="P:inositol catabolic process"/>
    <property type="evidence" value="ECO:0007669"/>
    <property type="project" value="UniProtKB-UniRule"/>
</dbReference>
<dbReference type="Gene3D" id="2.60.120.10">
    <property type="entry name" value="Jelly Rolls"/>
    <property type="match status" value="2"/>
</dbReference>
<dbReference type="HAMAP" id="MF_01673">
    <property type="entry name" value="IolB"/>
    <property type="match status" value="1"/>
</dbReference>
<dbReference type="InterPro" id="IPR024203">
    <property type="entry name" value="Deoxy-glucuronate_isom_IolB"/>
</dbReference>
<dbReference type="InterPro" id="IPR023770">
    <property type="entry name" value="IolB_Bacilli"/>
</dbReference>
<dbReference type="InterPro" id="IPR021120">
    <property type="entry name" value="KduI/IolB_isomerase"/>
</dbReference>
<dbReference type="InterPro" id="IPR014710">
    <property type="entry name" value="RmlC-like_jellyroll"/>
</dbReference>
<dbReference type="InterPro" id="IPR011051">
    <property type="entry name" value="RmlC_Cupin_sf"/>
</dbReference>
<dbReference type="NCBIfam" id="TIGR04378">
    <property type="entry name" value="myo_inos_iolB"/>
    <property type="match status" value="1"/>
</dbReference>
<dbReference type="PANTHER" id="PTHR39193">
    <property type="entry name" value="5-DEOXY-GLUCURONATE ISOMERASE"/>
    <property type="match status" value="1"/>
</dbReference>
<dbReference type="PANTHER" id="PTHR39193:SF1">
    <property type="entry name" value="5-DEOXY-GLUCURONATE ISOMERASE"/>
    <property type="match status" value="1"/>
</dbReference>
<dbReference type="Pfam" id="PF04962">
    <property type="entry name" value="KduI"/>
    <property type="match status" value="1"/>
</dbReference>
<dbReference type="PIRSF" id="PIRSF036628">
    <property type="entry name" value="IolB"/>
    <property type="match status" value="1"/>
</dbReference>
<dbReference type="SUPFAM" id="SSF51182">
    <property type="entry name" value="RmlC-like cupins"/>
    <property type="match status" value="1"/>
</dbReference>
<organism>
    <name type="scientific">Shouchella clausii (strain KSM-K16)</name>
    <name type="common">Alkalihalobacillus clausii</name>
    <dbReference type="NCBI Taxonomy" id="66692"/>
    <lineage>
        <taxon>Bacteria</taxon>
        <taxon>Bacillati</taxon>
        <taxon>Bacillota</taxon>
        <taxon>Bacilli</taxon>
        <taxon>Bacillales</taxon>
        <taxon>Bacillaceae</taxon>
        <taxon>Shouchella</taxon>
    </lineage>
</organism>
<accession>Q5WKZ0</accession>
<reference key="1">
    <citation type="submission" date="2003-10" db="EMBL/GenBank/DDBJ databases">
        <title>The complete genome sequence of the alkaliphilic Bacillus clausii KSM-K16.</title>
        <authorList>
            <person name="Takaki Y."/>
            <person name="Kageyama Y."/>
            <person name="Shimamura S."/>
            <person name="Suzuki H."/>
            <person name="Nishi S."/>
            <person name="Hatada Y."/>
            <person name="Kawai S."/>
            <person name="Ito S."/>
            <person name="Horikoshi K."/>
        </authorList>
    </citation>
    <scope>NUCLEOTIDE SEQUENCE [LARGE SCALE GENOMIC DNA]</scope>
    <source>
        <strain>KSM-K16</strain>
    </source>
</reference>
<evidence type="ECO:0000255" key="1">
    <source>
        <dbReference type="HAMAP-Rule" id="MF_01673"/>
    </source>
</evidence>
<protein>
    <recommendedName>
        <fullName evidence="1">5-deoxy-glucuronate isomerase</fullName>
        <shortName evidence="1">5DG isomerase</shortName>
        <ecNumber evidence="1">5.3.1.30</ecNumber>
    </recommendedName>
</protein>
<keyword id="KW-0413">Isomerase</keyword>
<keyword id="KW-1185">Reference proteome</keyword>